<accession>A9H298</accession>
<dbReference type="EMBL" id="CP001189">
    <property type="protein sequence ID" value="ACI52007.1"/>
    <property type="molecule type" value="Genomic_DNA"/>
</dbReference>
<dbReference type="EMBL" id="AM889285">
    <property type="protein sequence ID" value="CAP54125.1"/>
    <property type="molecule type" value="Genomic_DNA"/>
</dbReference>
<dbReference type="RefSeq" id="WP_012222421.1">
    <property type="nucleotide sequence ID" value="NC_010125.1"/>
</dbReference>
<dbReference type="SMR" id="A9H298"/>
<dbReference type="STRING" id="272568.GDI0182"/>
<dbReference type="KEGG" id="gdi:GDI0182"/>
<dbReference type="KEGG" id="gdj:Gdia_2252"/>
<dbReference type="eggNOG" id="COG2835">
    <property type="taxonomic scope" value="Bacteria"/>
</dbReference>
<dbReference type="HOGENOM" id="CLU_155659_2_2_5"/>
<dbReference type="OrthoDB" id="9812205at2"/>
<dbReference type="Proteomes" id="UP000001176">
    <property type="component" value="Chromosome"/>
</dbReference>
<dbReference type="GO" id="GO:0005829">
    <property type="term" value="C:cytosol"/>
    <property type="evidence" value="ECO:0007669"/>
    <property type="project" value="TreeGrafter"/>
</dbReference>
<dbReference type="FunFam" id="2.20.25.10:FF:000002">
    <property type="entry name" value="UPF0434 protein YcaR"/>
    <property type="match status" value="1"/>
</dbReference>
<dbReference type="Gene3D" id="2.20.25.10">
    <property type="match status" value="1"/>
</dbReference>
<dbReference type="HAMAP" id="MF_01187">
    <property type="entry name" value="UPF0434"/>
    <property type="match status" value="1"/>
</dbReference>
<dbReference type="InterPro" id="IPR005651">
    <property type="entry name" value="Trm112-like"/>
</dbReference>
<dbReference type="PANTHER" id="PTHR33505:SF4">
    <property type="entry name" value="PROTEIN PREY, MITOCHONDRIAL"/>
    <property type="match status" value="1"/>
</dbReference>
<dbReference type="PANTHER" id="PTHR33505">
    <property type="entry name" value="ZGC:162634"/>
    <property type="match status" value="1"/>
</dbReference>
<dbReference type="Pfam" id="PF03966">
    <property type="entry name" value="Trm112p"/>
    <property type="match status" value="1"/>
</dbReference>
<dbReference type="SUPFAM" id="SSF158997">
    <property type="entry name" value="Trm112p-like"/>
    <property type="match status" value="1"/>
</dbReference>
<gene>
    <name type="ordered locus">GDI0182</name>
    <name type="ordered locus">Gdia_2252</name>
</gene>
<comment type="similarity">
    <text evidence="1">Belongs to the UPF0434 family.</text>
</comment>
<proteinExistence type="inferred from homology"/>
<feature type="chain" id="PRO_1000138313" description="UPF0434 protein GDI0182/Gdia_2252">
    <location>
        <begin position="1"/>
        <end position="63"/>
    </location>
</feature>
<organism>
    <name type="scientific">Gluconacetobacter diazotrophicus (strain ATCC 49037 / DSM 5601 / CCUG 37298 / CIP 103539 / LMG 7603 / PAl5)</name>
    <dbReference type="NCBI Taxonomy" id="272568"/>
    <lineage>
        <taxon>Bacteria</taxon>
        <taxon>Pseudomonadati</taxon>
        <taxon>Pseudomonadota</taxon>
        <taxon>Alphaproteobacteria</taxon>
        <taxon>Acetobacterales</taxon>
        <taxon>Acetobacteraceae</taxon>
        <taxon>Gluconacetobacter</taxon>
    </lineage>
</organism>
<reference key="1">
    <citation type="journal article" date="2009" name="BMC Genomics">
        <title>Complete genome sequence of the sugarcane nitrogen-fixing endophyte Gluconacetobacter diazotrophicus Pal5.</title>
        <authorList>
            <person name="Bertalan M."/>
            <person name="Albano R."/>
            <person name="de Padua V."/>
            <person name="Rouws L."/>
            <person name="Rojas C."/>
            <person name="Hemerly A."/>
            <person name="Teixeira K."/>
            <person name="Schwab S."/>
            <person name="Araujo J."/>
            <person name="Oliveira A."/>
            <person name="Franca L."/>
            <person name="Magalhaes V."/>
            <person name="Alqueres S."/>
            <person name="Cardoso A."/>
            <person name="Almeida W."/>
            <person name="Loureiro M.M."/>
            <person name="Nogueira E."/>
            <person name="Cidade D."/>
            <person name="Oliveira D."/>
            <person name="Simao T."/>
            <person name="Macedo J."/>
            <person name="Valadao A."/>
            <person name="Dreschsel M."/>
            <person name="Freitas F."/>
            <person name="Vidal M."/>
            <person name="Guedes H."/>
            <person name="Rodrigues E."/>
            <person name="Meneses C."/>
            <person name="Brioso P."/>
            <person name="Pozzer L."/>
            <person name="Figueiredo D."/>
            <person name="Montano H."/>
            <person name="Junior J."/>
            <person name="de Souza Filho G."/>
            <person name="Martin Quintana Flores V."/>
            <person name="Ferreira B."/>
            <person name="Branco A."/>
            <person name="Gonzalez P."/>
            <person name="Guillobel H."/>
            <person name="Lemos M."/>
            <person name="Seibel L."/>
            <person name="Macedo J."/>
            <person name="Alves-Ferreira M."/>
            <person name="Sachetto-Martins G."/>
            <person name="Coelho A."/>
            <person name="Santos E."/>
            <person name="Amaral G."/>
            <person name="Neves A."/>
            <person name="Pacheco A.B."/>
            <person name="Carvalho D."/>
            <person name="Lery L."/>
            <person name="Bisch P."/>
            <person name="Rossle S.C."/>
            <person name="Urmenyi T."/>
            <person name="Rael Pereira A."/>
            <person name="Silva R."/>
            <person name="Rondinelli E."/>
            <person name="von Kruger W."/>
            <person name="Martins O."/>
            <person name="Baldani J.I."/>
            <person name="Ferreira P.C."/>
        </authorList>
    </citation>
    <scope>NUCLEOTIDE SEQUENCE [LARGE SCALE GENOMIC DNA]</scope>
    <source>
        <strain>ATCC 49037 / DSM 5601 / CCUG 37298 / CIP 103539 / LMG 7603 / PAl5</strain>
    </source>
</reference>
<reference key="2">
    <citation type="journal article" date="2010" name="Stand. Genomic Sci.">
        <title>Two genome sequences of the same bacterial strain, Gluconacetobacter diazotrophicus PAl 5, suggest a new standard in genome sequence submission.</title>
        <authorList>
            <person name="Giongo A."/>
            <person name="Tyler H.L."/>
            <person name="Zipperer U.N."/>
            <person name="Triplett E.W."/>
        </authorList>
    </citation>
    <scope>NUCLEOTIDE SEQUENCE [LARGE SCALE GENOMIC DNA]</scope>
    <source>
        <strain>ATCC 49037 / DSM 5601 / CCUG 37298 / CIP 103539 / LMG 7603 / PAl5</strain>
    </source>
</reference>
<protein>
    <recommendedName>
        <fullName evidence="1">UPF0434 protein GDI0182/Gdia_2252</fullName>
    </recommendedName>
</protein>
<name>Y182_GLUDA</name>
<keyword id="KW-1185">Reference proteome</keyword>
<evidence type="ECO:0000255" key="1">
    <source>
        <dbReference type="HAMAP-Rule" id="MF_01187"/>
    </source>
</evidence>
<sequence length="63" mass="6841">MTETAQAPLDPRLLSVLVCPVTKGPLIYDREAGELISRQAGLAFPIRDGIPIMLPDEARPLDV</sequence>